<evidence type="ECO:0000250" key="1"/>
<evidence type="ECO:0000250" key="2">
    <source>
        <dbReference type="UniProtKB" id="A2RRU1"/>
    </source>
</evidence>
<evidence type="ECO:0000250" key="3">
    <source>
        <dbReference type="UniProtKB" id="P13807"/>
    </source>
</evidence>
<evidence type="ECO:0000250" key="4">
    <source>
        <dbReference type="UniProtKB" id="P13834"/>
    </source>
</evidence>
<evidence type="ECO:0000250" key="5">
    <source>
        <dbReference type="UniProtKB" id="P54840"/>
    </source>
</evidence>
<evidence type="ECO:0000250" key="6">
    <source>
        <dbReference type="UniProtKB" id="Q9Z1E4"/>
    </source>
</evidence>
<evidence type="ECO:0000256" key="7">
    <source>
        <dbReference type="SAM" id="MobiDB-lite"/>
    </source>
</evidence>
<evidence type="ECO:0000305" key="8"/>
<reference key="1">
    <citation type="submission" date="2002-07" db="EMBL/GenBank/DDBJ databases">
        <title>Monkey skeletal muscle glycogen synthase sequence.</title>
        <authorList>
            <person name="Ortmeyer H.K."/>
            <person name="Marciani K.R."/>
            <person name="Hansen B.C."/>
        </authorList>
    </citation>
    <scope>NUCLEOTIDE SEQUENCE [MRNA]</scope>
    <source>
        <tissue>Skeletal muscle</tissue>
    </source>
</reference>
<accession>Q8MJ26</accession>
<sequence length="737" mass="83787">MPLNRTLSMSSLPGLEDWEDEFDLENTVLFEVAWEVANKVGGIYTVLQTKAKVTGDEWGDNYYLVGPYTEQGVRTQVELLEAPTPALKKTLDSMNSKGCKVYFGRWLIEGGPLVVLLDVGASAWALERWKGELWDTCNIGVPWYDREANDAVLFGFLTTWFLGEFLAQSEEKPHVVAHFHEWLAGIGLCLCRARRLPVATIFTTHATLLGRYLCAGAVDFYNNLENFNVDKEAGERQIYHRYCMERAAAHCAHVFTTVSQITAIEAQHLLKRKPDIVTPNGLNVKKFSAMHEFQNLHAQSKARIQEFVRGHFYGHLDFNLDKTLYFFIAGRYEFSNKGADVFLEALARLNYLLRVNGSEQTVVALFIMPARTNNFNVETLKGQAVRKQLWDTANTVKEKFGRKLYESLLVGSLPDMNKMLDKEDFTMMKRAIFATQRQSFPPVCTHNMLDDSSDPILTTIRRIGLFNSSADRVKVIFHPEFLSSTSPLLPVDYEEFVRGCHLGVFPSYYEPWGYTPAECTVMGIPSISTNLSGFGCFMEEHIADPSAYGIYILDRRFRSLDDSCSQLTSFLYSFCQQSRRQRIIQRNRTERLSDLLDWKYLGRYYMSARHMALSKAFPEHFTYEPSEADAAQGYRYPRPASVPPSPSLSRHSSPHQSEDEEDPRNGPLEEDSERYDEDEEAAKDRRNIRAPEWPRRASCTSSTSGSKRNSVDTATSSSLSTPSEPLSPTSSLGEERN</sequence>
<protein>
    <recommendedName>
        <fullName>Glycogen [starch] synthase, muscle</fullName>
        <ecNumber evidence="3">2.4.1.11</ecNumber>
    </recommendedName>
    <alternativeName>
        <fullName evidence="3">Glycogen synthase 1</fullName>
    </alternativeName>
</protein>
<keyword id="KW-0021">Allosteric enzyme</keyword>
<keyword id="KW-0320">Glycogen biosynthesis</keyword>
<keyword id="KW-0328">Glycosyltransferase</keyword>
<keyword id="KW-0597">Phosphoprotein</keyword>
<keyword id="KW-1185">Reference proteome</keyword>
<keyword id="KW-0808">Transferase</keyword>
<name>GYS1_MACMU</name>
<proteinExistence type="evidence at transcript level"/>
<gene>
    <name type="primary">GYS1</name>
    <name type="synonym">GYS</name>
</gene>
<organism>
    <name type="scientific">Macaca mulatta</name>
    <name type="common">Rhesus macaque</name>
    <dbReference type="NCBI Taxonomy" id="9544"/>
    <lineage>
        <taxon>Eukaryota</taxon>
        <taxon>Metazoa</taxon>
        <taxon>Chordata</taxon>
        <taxon>Craniata</taxon>
        <taxon>Vertebrata</taxon>
        <taxon>Euteleostomi</taxon>
        <taxon>Mammalia</taxon>
        <taxon>Eutheria</taxon>
        <taxon>Euarchontoglires</taxon>
        <taxon>Primates</taxon>
        <taxon>Haplorrhini</taxon>
        <taxon>Catarrhini</taxon>
        <taxon>Cercopithecidae</taxon>
        <taxon>Cercopithecinae</taxon>
        <taxon>Macaca</taxon>
    </lineage>
</organism>
<comment type="function">
    <text evidence="3">Glycogen synthase participates in the glycogen biosynthetic process along with glycogenin and glycogen branching enzyme. Extends the primer composed of a few glucose units formed by glycogenin by adding new glucose units to it. In this context, glycogen synthase transfers the glycosyl residue from UDP-Glc to the non-reducing end of alpha-1,4-glucan.</text>
</comment>
<comment type="catalytic activity">
    <reaction evidence="3">
        <text>[(1-&gt;4)-alpha-D-glucosyl](n) + UDP-alpha-D-glucose = [(1-&gt;4)-alpha-D-glucosyl](n+1) + UDP + H(+)</text>
        <dbReference type="Rhea" id="RHEA:18549"/>
        <dbReference type="Rhea" id="RHEA-COMP:9584"/>
        <dbReference type="Rhea" id="RHEA-COMP:9587"/>
        <dbReference type="ChEBI" id="CHEBI:15378"/>
        <dbReference type="ChEBI" id="CHEBI:15444"/>
        <dbReference type="ChEBI" id="CHEBI:58223"/>
        <dbReference type="ChEBI" id="CHEBI:58885"/>
        <dbReference type="EC" id="2.4.1.11"/>
    </reaction>
    <physiologicalReaction direction="left-to-right" evidence="3">
        <dbReference type="Rhea" id="RHEA:18550"/>
    </physiologicalReaction>
</comment>
<comment type="activity regulation">
    <text evidence="4 5">Allosteric activation by glucose-6-phosphate. Phosphorylation reduces the activity towards UDP-glucose. When in the non-phosphorylated state, glycogen synthase does not require glucose-6-phosphate as an allosteric activator; when phosphorylated it does (By similarity).</text>
</comment>
<comment type="pathway">
    <text evidence="3">Glycan biosynthesis; glycogen biosynthesis.</text>
</comment>
<comment type="subunit">
    <text evidence="3">Part of the GYS1-GYG1 complex, a heterooctamer composed of a tetramer of GYS1 and 2 dimers of GYG1, where each GYS1 protomer binds to one GYG1 subunit (via GYG1 C-terminus); the GYS1 tetramer may dissociate from GYG1 dimers to continue glycogen polymerization on its own.</text>
</comment>
<comment type="PTM">
    <text evidence="1">Phosphorylation at Ser-8 by AMPK inactivates the enzyme activity. Primed phosphorylation at Ser-657 (site 5) by CSNK2A1 and CSNK2A2 is required for inhibitory phosphorylation at Ser-641 (site 3a), Ser-645 (site 3b), Ser-649 (site 3c) and Ser-653 (site 4) by GSK3A an GSK3B. Phosphorylated at Ser-641 by PASK, leading to inactivation; phosphorylation by PASK is inhibited by glycogen. Phosphorylated at Ser-641 by DYRK2, leading to inactivation. Dephosphorylation at Ser-641 and Ser-645 by PP1 activates the enzyme (By similarity).</text>
</comment>
<comment type="similarity">
    <text evidence="8">Belongs to the glycosyltransferase 3 family.</text>
</comment>
<feature type="chain" id="PRO_0000194764" description="Glycogen [starch] synthase, muscle">
    <location>
        <begin position="1"/>
        <end position="737"/>
    </location>
</feature>
<feature type="region of interest" description="Disordered" evidence="7">
    <location>
        <begin position="634"/>
        <end position="737"/>
    </location>
</feature>
<feature type="compositionally biased region" description="Acidic residues" evidence="7">
    <location>
        <begin position="658"/>
        <end position="681"/>
    </location>
</feature>
<feature type="compositionally biased region" description="Basic and acidic residues" evidence="7">
    <location>
        <begin position="682"/>
        <end position="695"/>
    </location>
</feature>
<feature type="compositionally biased region" description="Polar residues" evidence="7">
    <location>
        <begin position="698"/>
        <end position="714"/>
    </location>
</feature>
<feature type="compositionally biased region" description="Low complexity" evidence="7">
    <location>
        <begin position="715"/>
        <end position="737"/>
    </location>
</feature>
<feature type="binding site" evidence="3">
    <location>
        <position position="39"/>
    </location>
    <ligand>
        <name>UDP</name>
        <dbReference type="ChEBI" id="CHEBI:58223"/>
    </ligand>
</feature>
<feature type="binding site" evidence="3">
    <location>
        <position position="205"/>
    </location>
    <ligand>
        <name>UDP-alpha-D-glucose</name>
        <dbReference type="ChEBI" id="CHEBI:58885"/>
    </ligand>
</feature>
<feature type="binding site" evidence="3">
    <location>
        <position position="211"/>
    </location>
    <ligand>
        <name>UDP-alpha-D-glucose</name>
        <dbReference type="ChEBI" id="CHEBI:58885"/>
    </ligand>
</feature>
<feature type="binding site" description="in other chain" evidence="3">
    <location>
        <position position="291"/>
    </location>
    <ligand>
        <name>alpha-D-glucose 6-phosphate</name>
        <dbReference type="ChEBI" id="CHEBI:58225"/>
        <note>allosteric activator; ligand shared between two neighboring subunits</note>
    </ligand>
</feature>
<feature type="binding site" description="in other chain" evidence="3">
    <location>
        <position position="292"/>
    </location>
    <ligand>
        <name>alpha-D-glucose 6-phosphate</name>
        <dbReference type="ChEBI" id="CHEBI:58225"/>
        <note>allosteric activator; ligand shared between two neighboring subunits</note>
    </ligand>
</feature>
<feature type="binding site" evidence="3">
    <location>
        <position position="294"/>
    </location>
    <ligand>
        <name>alpha-D-glucose 6-phosphate</name>
        <dbReference type="ChEBI" id="CHEBI:58225"/>
        <note>allosteric activator; ligand shared between two neighboring subunits</note>
    </ligand>
</feature>
<feature type="binding site" evidence="3">
    <location>
        <position position="297"/>
    </location>
    <ligand>
        <name>alpha-D-glucose 6-phosphate</name>
        <dbReference type="ChEBI" id="CHEBI:58225"/>
        <note>allosteric activator; ligand shared between two neighboring subunits</note>
    </ligand>
</feature>
<feature type="binding site" evidence="3">
    <location>
        <position position="301"/>
    </location>
    <ligand>
        <name>alpha-D-glucose 6-phosphate</name>
        <dbReference type="ChEBI" id="CHEBI:58225"/>
        <note>allosteric activator; ligand shared between two neighboring subunits</note>
    </ligand>
</feature>
<feature type="binding site" evidence="3">
    <location>
        <position position="331"/>
    </location>
    <ligand>
        <name>UDP</name>
        <dbReference type="ChEBI" id="CHEBI:58223"/>
    </ligand>
</feature>
<feature type="binding site" evidence="3">
    <location>
        <position position="331"/>
    </location>
    <ligand>
        <name>UDP-alpha-D-glucose</name>
        <dbReference type="ChEBI" id="CHEBI:58885"/>
    </ligand>
</feature>
<feature type="binding site" evidence="3">
    <location>
        <position position="501"/>
    </location>
    <ligand>
        <name>alpha-D-glucose 6-phosphate</name>
        <dbReference type="ChEBI" id="CHEBI:58225"/>
        <note>allosteric activator; ligand shared between two neighboring subunits</note>
    </ligand>
</feature>
<feature type="binding site" evidence="3">
    <location>
        <position position="510"/>
    </location>
    <ligand>
        <name>UDP-alpha-D-glucose</name>
        <dbReference type="ChEBI" id="CHEBI:58885"/>
    </ligand>
</feature>
<feature type="binding site" evidence="3">
    <location>
        <position position="512"/>
    </location>
    <ligand>
        <name>UDP-alpha-D-glucose</name>
        <dbReference type="ChEBI" id="CHEBI:58885"/>
    </ligand>
</feature>
<feature type="binding site" evidence="3">
    <location>
        <position position="513"/>
    </location>
    <ligand>
        <name>UDP-alpha-D-glucose</name>
        <dbReference type="ChEBI" id="CHEBI:58885"/>
    </ligand>
</feature>
<feature type="binding site" evidence="3">
    <location>
        <position position="515"/>
    </location>
    <ligand>
        <name>UDP</name>
        <dbReference type="ChEBI" id="CHEBI:58223"/>
    </ligand>
</feature>
<feature type="binding site" evidence="3">
    <location>
        <position position="582"/>
    </location>
    <ligand>
        <name>alpha-D-glucose 6-phosphate</name>
        <dbReference type="ChEBI" id="CHEBI:58225"/>
        <note>allosteric activator; ligand shared between two neighboring subunits</note>
    </ligand>
</feature>
<feature type="binding site" evidence="3">
    <location>
        <position position="586"/>
    </location>
    <ligand>
        <name>alpha-D-glucose 6-phosphate</name>
        <dbReference type="ChEBI" id="CHEBI:58225"/>
        <note>allosteric activator; ligand shared between two neighboring subunits</note>
    </ligand>
</feature>
<feature type="modified residue" description="Phosphoserine; by AMPK and PKA" evidence="6">
    <location>
        <position position="8"/>
    </location>
</feature>
<feature type="modified residue" description="Phosphoserine" evidence="4">
    <location>
        <position position="11"/>
    </location>
</feature>
<feature type="modified residue" description="Phosphoserine" evidence="3">
    <location>
        <position position="412"/>
    </location>
</feature>
<feature type="modified residue" description="Phosphoserine; by DYRK2, GSK3-alpha, GSK3-beta and PASK" evidence="4">
    <location>
        <position position="641"/>
    </location>
</feature>
<feature type="modified residue" description="Phosphoserine; by GSK3-alpha and GSK3-beta" evidence="4">
    <location>
        <position position="645"/>
    </location>
</feature>
<feature type="modified residue" description="Phosphoserine; by GSK3-alpha and GSK3-beta" evidence="4">
    <location>
        <position position="649"/>
    </location>
</feature>
<feature type="modified residue" description="Phosphoserine" evidence="2">
    <location>
        <position position="652"/>
    </location>
</feature>
<feature type="modified residue" description="Phosphoserine; by GSK3-alpha and GSK3-beta" evidence="4">
    <location>
        <position position="653"/>
    </location>
</feature>
<feature type="modified residue" description="Phosphoserine; by CK2" evidence="4">
    <location>
        <position position="657"/>
    </location>
</feature>
<feature type="modified residue" description="Phosphoserine" evidence="6">
    <location>
        <position position="672"/>
    </location>
</feature>
<feature type="modified residue" description="Phosphoserine" evidence="4">
    <location>
        <position position="698"/>
    </location>
</feature>
<feature type="modified residue" description="Phosphothreonine" evidence="3">
    <location>
        <position position="700"/>
    </location>
</feature>
<feature type="modified residue" description="Phosphoserine" evidence="3">
    <location>
        <position position="710"/>
    </location>
</feature>
<feature type="modified residue" description="Phosphothreonine" evidence="6">
    <location>
        <position position="721"/>
    </location>
</feature>
<feature type="modified residue" description="Phosphoserine" evidence="3">
    <location>
        <position position="727"/>
    </location>
</feature>
<feature type="modified residue" description="Phosphoserine" evidence="3">
    <location>
        <position position="731"/>
    </location>
</feature>
<dbReference type="EC" id="2.4.1.11" evidence="3"/>
<dbReference type="EMBL" id="AF529178">
    <property type="protein sequence ID" value="AAM93267.1"/>
    <property type="molecule type" value="mRNA"/>
</dbReference>
<dbReference type="RefSeq" id="NP_001028058.1">
    <property type="nucleotide sequence ID" value="NM_001032886.1"/>
</dbReference>
<dbReference type="SMR" id="Q8MJ26"/>
<dbReference type="FunCoup" id="Q8MJ26">
    <property type="interactions" value="1980"/>
</dbReference>
<dbReference type="STRING" id="9544.ENSMMUP00000005219"/>
<dbReference type="CAZy" id="GT3">
    <property type="family name" value="Glycosyltransferase Family 3"/>
</dbReference>
<dbReference type="PaxDb" id="9544-ENSMMUP00000005219"/>
<dbReference type="GeneID" id="574233"/>
<dbReference type="KEGG" id="mcc:574233"/>
<dbReference type="CTD" id="2997"/>
<dbReference type="eggNOG" id="KOG3742">
    <property type="taxonomic scope" value="Eukaryota"/>
</dbReference>
<dbReference type="InParanoid" id="Q8MJ26"/>
<dbReference type="OrthoDB" id="6335297at2759"/>
<dbReference type="BRENDA" id="2.4.1.11">
    <property type="organism ID" value="3126"/>
</dbReference>
<dbReference type="UniPathway" id="UPA00164"/>
<dbReference type="Proteomes" id="UP000006718">
    <property type="component" value="Unassembled WGS sequence"/>
</dbReference>
<dbReference type="GO" id="GO:0005737">
    <property type="term" value="C:cytoplasm"/>
    <property type="evidence" value="ECO:0000318"/>
    <property type="project" value="GO_Central"/>
</dbReference>
<dbReference type="GO" id="GO:0004373">
    <property type="term" value="F:alpha-1,4-glucan glucosyltransferase (UDP-glucose donor) activity"/>
    <property type="evidence" value="ECO:0000250"/>
    <property type="project" value="UniProtKB"/>
</dbReference>
<dbReference type="GO" id="GO:0005978">
    <property type="term" value="P:glycogen biosynthetic process"/>
    <property type="evidence" value="ECO:0000250"/>
    <property type="project" value="UniProtKB"/>
</dbReference>
<dbReference type="CDD" id="cd03793">
    <property type="entry name" value="GT3_GSY2-like"/>
    <property type="match status" value="1"/>
</dbReference>
<dbReference type="FunFam" id="3.40.50.2000:FF:000014">
    <property type="entry name" value="Glycogen [starch] synthase"/>
    <property type="match status" value="1"/>
</dbReference>
<dbReference type="FunFam" id="3.40.50.2000:FF:000028">
    <property type="entry name" value="Glycogen [starch] synthase"/>
    <property type="match status" value="1"/>
</dbReference>
<dbReference type="Gene3D" id="3.40.50.2000">
    <property type="entry name" value="Glycogen Phosphorylase B"/>
    <property type="match status" value="2"/>
</dbReference>
<dbReference type="InterPro" id="IPR008631">
    <property type="entry name" value="Glycogen_synth"/>
</dbReference>
<dbReference type="PANTHER" id="PTHR10176:SF2">
    <property type="entry name" value="GLYCOGEN [STARCH] SYNTHASE, MUSCLE"/>
    <property type="match status" value="1"/>
</dbReference>
<dbReference type="PANTHER" id="PTHR10176">
    <property type="entry name" value="GLYCOGEN SYNTHASE"/>
    <property type="match status" value="1"/>
</dbReference>
<dbReference type="Pfam" id="PF05693">
    <property type="entry name" value="Glycogen_syn"/>
    <property type="match status" value="1"/>
</dbReference>
<dbReference type="SUPFAM" id="SSF53756">
    <property type="entry name" value="UDP-Glycosyltransferase/glycogen phosphorylase"/>
    <property type="match status" value="2"/>
</dbReference>